<evidence type="ECO:0000255" key="1">
    <source>
        <dbReference type="HAMAP-Rule" id="MF_04074"/>
    </source>
</evidence>
<evidence type="ECO:0000256" key="2">
    <source>
        <dbReference type="SAM" id="MobiDB-lite"/>
    </source>
</evidence>
<feature type="chain" id="PRO_0000222371" description="Protein X">
    <location>
        <begin position="1"/>
        <end position="141"/>
    </location>
</feature>
<feature type="region of interest" description="Disordered" evidence="2">
    <location>
        <begin position="24"/>
        <end position="52"/>
    </location>
</feature>
<feature type="region of interest" description="Mitochondrial targeting sequence" evidence="1">
    <location>
        <begin position="68"/>
        <end position="113"/>
    </location>
</feature>
<feature type="compositionally biased region" description="Low complexity" evidence="2">
    <location>
        <begin position="24"/>
        <end position="48"/>
    </location>
</feature>
<sequence length="141" mass="15232">MAARLCCQLDSARDVLLLRPFGPQSSGPSFPRPAAGSAASSASSPSPSDESDLPLGRLPACFASASGPCCLVFTCAELRTMDSTVNFVSWHANRQLGMPSKDLWTPYIKDQLLTKWEEGSIDPRLSIFVLGGCRHKCMRLL</sequence>
<comment type="function">
    <text evidence="1">Multifunctional protein that plays a role in silencing host antiviral defenses and promoting viral transcription. Does not seem to be essential for HBV infection. May be directly involved in development of cirrhosis and liver cancer (hepatocellular carcinoma). Most of cytosolic activities involve modulation of cytosolic calcium. The effect on apoptosis is controversial depending on the cell types in which the studies have been conducted. May induce apoptosis by localizing in mitochondria and causing loss of mitochondrial membrane potential. May also modulate apoptosis by binding host CFLAR, a key regulator of the death-inducing signaling complex (DISC). Promotes viral transcription by using the host E3 ubiquitin ligase DDB1 to target the SMC5-SMC6 complex to proteasomal degradation. This host complex would otherwise bind to viral episomal DNA, and prevents its transcription. Moderately stimulates transcription of many different viral and cellular transcription elements. Promoters and enhancers stimulated by HBx contain DNA binding sites for NF-kappa-B, AP-1, AP-2, c-EBP, ATF/CREB, or the calcium-activated factor NF-AT.</text>
</comment>
<comment type="subunit">
    <text evidence="1">May form homodimer. May interact with host CEBPA, CFLAR, CREB1, DDB1, E4F1, HBXIP, HSPD1/HSP60, NFKBIA, POLR2E and SMAD4. Interacts with host SMC5-SMC6 complex and induces its degradation. Interacts with host TRPC4AP; leading to prevent ubiquitination of TRPC4AP. Interacts with host PLSCR1; this interaction promotes ubiquitination and degradation of HBx and impairs HBx-mediated cell proliferation.</text>
</comment>
<comment type="subcellular location">
    <subcellularLocation>
        <location evidence="1">Host cytoplasm</location>
    </subcellularLocation>
    <subcellularLocation>
        <location evidence="1">Host nucleus</location>
    </subcellularLocation>
    <subcellularLocation>
        <location evidence="1">Host mitochondrion</location>
    </subcellularLocation>
    <text evidence="1">Mainly cytoplasmic as only a fraction is detected in the nucleus. In cytoplasm, a minor fraction associates with mitochondria or proteasomes.</text>
</comment>
<comment type="PTM">
    <text evidence="1">A fraction may be phosphorylated in insect cells and HepG2 cells, a human hepatoblastoma cell line. Phosphorylated in vitro by host protein kinase C or mitogen-activated protein kinase. N-acetylated in insect cells.</text>
</comment>
<comment type="similarity">
    <text evidence="1">Belongs to the orthohepadnavirus protein X family.</text>
</comment>
<protein>
    <recommendedName>
        <fullName evidence="1">Protein X</fullName>
    </recommendedName>
    <alternativeName>
        <fullName evidence="1">HBx</fullName>
    </alternativeName>
    <alternativeName>
        <fullName evidence="1">Peptide X</fullName>
    </alternativeName>
    <alternativeName>
        <fullName evidence="1">pX</fullName>
    </alternativeName>
</protein>
<organism>
    <name type="scientific">Woodchuck hepatitis B virus (isolate 7)</name>
    <name type="common">WHV</name>
    <dbReference type="NCBI Taxonomy" id="10432"/>
    <lineage>
        <taxon>Viruses</taxon>
        <taxon>Riboviria</taxon>
        <taxon>Pararnavirae</taxon>
        <taxon>Artverviricota</taxon>
        <taxon>Revtraviricetes</taxon>
        <taxon>Blubervirales</taxon>
        <taxon>Hepadnaviridae</taxon>
        <taxon>Orthohepadnavirus</taxon>
        <taxon>Woodchuck hepatitis virus</taxon>
    </lineage>
</organism>
<dbReference type="EMBL" id="M18752">
    <property type="protein sequence ID" value="AAA46768.1"/>
    <property type="molecule type" value="Genomic_DNA"/>
</dbReference>
<dbReference type="PIR" id="A29969">
    <property type="entry name" value="QQVL7"/>
</dbReference>
<dbReference type="RefSeq" id="NP_671815.1">
    <property type="nucleotide sequence ID" value="NC_004107.1"/>
</dbReference>
<dbReference type="KEGG" id="vg:2546422"/>
<dbReference type="Proteomes" id="UP000008598">
    <property type="component" value="Segment"/>
</dbReference>
<dbReference type="GO" id="GO:0033650">
    <property type="term" value="C:host cell mitochondrion"/>
    <property type="evidence" value="ECO:0007669"/>
    <property type="project" value="UniProtKB-SubCell"/>
</dbReference>
<dbReference type="GO" id="GO:0042025">
    <property type="term" value="C:host cell nucleus"/>
    <property type="evidence" value="ECO:0007669"/>
    <property type="project" value="UniProtKB-SubCell"/>
</dbReference>
<dbReference type="GO" id="GO:0006351">
    <property type="term" value="P:DNA-templated transcription"/>
    <property type="evidence" value="ECO:0007669"/>
    <property type="project" value="UniProtKB-UniRule"/>
</dbReference>
<dbReference type="GO" id="GO:0085033">
    <property type="term" value="P:symbiont-mediated activation of host NF-kappaB cascade"/>
    <property type="evidence" value="ECO:0007669"/>
    <property type="project" value="UniProtKB-UniRule"/>
</dbReference>
<dbReference type="GO" id="GO:0039592">
    <property type="term" value="P:symbiont-mediated arrest of host cell cycle during G2/M transition"/>
    <property type="evidence" value="ECO:0007669"/>
    <property type="project" value="UniProtKB-UniRule"/>
</dbReference>
<dbReference type="GO" id="GO:0019079">
    <property type="term" value="P:viral genome replication"/>
    <property type="evidence" value="ECO:0007669"/>
    <property type="project" value="UniProtKB-UniRule"/>
</dbReference>
<dbReference type="HAMAP" id="MF_04074">
    <property type="entry name" value="HBV_X"/>
    <property type="match status" value="1"/>
</dbReference>
<dbReference type="InterPro" id="IPR000236">
    <property type="entry name" value="Transactivation_prot_X"/>
</dbReference>
<dbReference type="Pfam" id="PF00739">
    <property type="entry name" value="X"/>
    <property type="match status" value="1"/>
</dbReference>
<proteinExistence type="inferred from homology"/>
<keyword id="KW-1074">Activation of host NF-kappa-B by virus</keyword>
<keyword id="KW-0010">Activator</keyword>
<keyword id="KW-0053">Apoptosis</keyword>
<keyword id="KW-1035">Host cytoplasm</keyword>
<keyword id="KW-1079">Host G2/M cell cycle arrest by virus</keyword>
<keyword id="KW-1045">Host mitochondrion</keyword>
<keyword id="KW-1048">Host nucleus</keyword>
<keyword id="KW-0945">Host-virus interaction</keyword>
<keyword id="KW-1121">Modulation of host cell cycle by virus</keyword>
<keyword id="KW-0804">Transcription</keyword>
<keyword id="KW-0805">Transcription regulation</keyword>
<gene>
    <name evidence="1" type="primary">X</name>
</gene>
<name>X_WHV4</name>
<reference key="1">
    <citation type="journal article" date="1988" name="Virology">
        <title>Sequence comparison of woodchuck hepatitis virus replicative forms shows conservation of the genome.</title>
        <authorList>
            <person name="Cohen J.I."/>
            <person name="Miller R.H."/>
            <person name="Rosenblum B."/>
            <person name="Denniston K."/>
            <person name="Gerin J.L."/>
            <person name="Purcell R.H."/>
        </authorList>
    </citation>
    <scope>NUCLEOTIDE SEQUENCE [GENOMIC DNA]</scope>
</reference>
<organismHost>
    <name type="scientific">Marmota monax</name>
    <name type="common">Woodchuck</name>
    <dbReference type="NCBI Taxonomy" id="9995"/>
</organismHost>
<accession>P12913</accession>